<feature type="chain" id="PRO_1000018793" description="Phosphoribosylaminoimidazole-succinocarboxamide synthase">
    <location>
        <begin position="1"/>
        <end position="235"/>
    </location>
</feature>
<sequence>MSKQLIYSGKAKDIYTTEDENLIISTYKDQATAFNGVKKEQIAGKGVLNNQISSFIFEKLNAAGVATHFVEKLSDTEQLNKKVKIIPLEVVLRNYTAGSFSKRFGVDEGIALETPIVEFYYKNDDLDDPFINDEHVKFLQIADDQQIAYLKEEARRINELLKVWFAEIGLKLIDFKLEFGFDKDGKIILADEFSPDNCRLWDADGNHMDKDVFRRGLGELTDVYEIVWEKLQELK</sequence>
<accession>Q04N25</accession>
<reference key="1">
    <citation type="journal article" date="2007" name="J. Bacteriol.">
        <title>Genome sequence of Avery's virulent serotype 2 strain D39 of Streptococcus pneumoniae and comparison with that of unencapsulated laboratory strain R6.</title>
        <authorList>
            <person name="Lanie J.A."/>
            <person name="Ng W.-L."/>
            <person name="Kazmierczak K.M."/>
            <person name="Andrzejewski T.M."/>
            <person name="Davidsen T.M."/>
            <person name="Wayne K.J."/>
            <person name="Tettelin H."/>
            <person name="Glass J.I."/>
            <person name="Winkler M.E."/>
        </authorList>
    </citation>
    <scope>NUCLEOTIDE SEQUENCE [LARGE SCALE GENOMIC DNA]</scope>
    <source>
        <strain>D39 / NCTC 7466</strain>
    </source>
</reference>
<comment type="catalytic activity">
    <reaction evidence="1">
        <text>5-amino-1-(5-phospho-D-ribosyl)imidazole-4-carboxylate + L-aspartate + ATP = (2S)-2-[5-amino-1-(5-phospho-beta-D-ribosyl)imidazole-4-carboxamido]succinate + ADP + phosphate + 2 H(+)</text>
        <dbReference type="Rhea" id="RHEA:22628"/>
        <dbReference type="ChEBI" id="CHEBI:15378"/>
        <dbReference type="ChEBI" id="CHEBI:29991"/>
        <dbReference type="ChEBI" id="CHEBI:30616"/>
        <dbReference type="ChEBI" id="CHEBI:43474"/>
        <dbReference type="ChEBI" id="CHEBI:58443"/>
        <dbReference type="ChEBI" id="CHEBI:77657"/>
        <dbReference type="ChEBI" id="CHEBI:456216"/>
        <dbReference type="EC" id="6.3.2.6"/>
    </reaction>
</comment>
<comment type="pathway">
    <text evidence="1">Purine metabolism; IMP biosynthesis via de novo pathway; 5-amino-1-(5-phospho-D-ribosyl)imidazole-4-carboxamide from 5-amino-1-(5-phospho-D-ribosyl)imidazole-4-carboxylate: step 1/2.</text>
</comment>
<comment type="similarity">
    <text evidence="1">Belongs to the SAICAR synthetase family.</text>
</comment>
<gene>
    <name evidence="1" type="primary">purC</name>
    <name type="ordered locus">SPD_0051</name>
</gene>
<organism>
    <name type="scientific">Streptococcus pneumoniae serotype 2 (strain D39 / NCTC 7466)</name>
    <dbReference type="NCBI Taxonomy" id="373153"/>
    <lineage>
        <taxon>Bacteria</taxon>
        <taxon>Bacillati</taxon>
        <taxon>Bacillota</taxon>
        <taxon>Bacilli</taxon>
        <taxon>Lactobacillales</taxon>
        <taxon>Streptococcaceae</taxon>
        <taxon>Streptococcus</taxon>
    </lineage>
</organism>
<evidence type="ECO:0000255" key="1">
    <source>
        <dbReference type="HAMAP-Rule" id="MF_00137"/>
    </source>
</evidence>
<keyword id="KW-0067">ATP-binding</keyword>
<keyword id="KW-0436">Ligase</keyword>
<keyword id="KW-0547">Nucleotide-binding</keyword>
<keyword id="KW-0658">Purine biosynthesis</keyword>
<keyword id="KW-1185">Reference proteome</keyword>
<dbReference type="EC" id="6.3.2.6" evidence="1"/>
<dbReference type="EMBL" id="CP000410">
    <property type="protein sequence ID" value="ABJ54486.1"/>
    <property type="molecule type" value="Genomic_DNA"/>
</dbReference>
<dbReference type="RefSeq" id="WP_000043299.1">
    <property type="nucleotide sequence ID" value="NZ_JAMLJR010000017.1"/>
</dbReference>
<dbReference type="SMR" id="Q04N25"/>
<dbReference type="PaxDb" id="373153-SPD_0051"/>
<dbReference type="KEGG" id="spd:SPD_0051"/>
<dbReference type="eggNOG" id="COG0152">
    <property type="taxonomic scope" value="Bacteria"/>
</dbReference>
<dbReference type="HOGENOM" id="CLU_061495_2_0_9"/>
<dbReference type="UniPathway" id="UPA00074">
    <property type="reaction ID" value="UER00131"/>
</dbReference>
<dbReference type="Proteomes" id="UP000001452">
    <property type="component" value="Chromosome"/>
</dbReference>
<dbReference type="GO" id="GO:0005524">
    <property type="term" value="F:ATP binding"/>
    <property type="evidence" value="ECO:0007669"/>
    <property type="project" value="UniProtKB-KW"/>
</dbReference>
<dbReference type="GO" id="GO:0004639">
    <property type="term" value="F:phosphoribosylaminoimidazolesuccinocarboxamide synthase activity"/>
    <property type="evidence" value="ECO:0007669"/>
    <property type="project" value="UniProtKB-UniRule"/>
</dbReference>
<dbReference type="GO" id="GO:0006189">
    <property type="term" value="P:'de novo' IMP biosynthetic process"/>
    <property type="evidence" value="ECO:0007669"/>
    <property type="project" value="UniProtKB-UniRule"/>
</dbReference>
<dbReference type="GO" id="GO:0009236">
    <property type="term" value="P:cobalamin biosynthetic process"/>
    <property type="evidence" value="ECO:0007669"/>
    <property type="project" value="InterPro"/>
</dbReference>
<dbReference type="CDD" id="cd01415">
    <property type="entry name" value="SAICAR_synt_PurC"/>
    <property type="match status" value="1"/>
</dbReference>
<dbReference type="FunFam" id="3.30.200.20:FF:000189">
    <property type="entry name" value="Phosphoribosylaminoimidazole-succinocarboxamide synthase"/>
    <property type="match status" value="1"/>
</dbReference>
<dbReference type="FunFam" id="3.30.470.20:FF:000006">
    <property type="entry name" value="Phosphoribosylaminoimidazole-succinocarboxamide synthase"/>
    <property type="match status" value="1"/>
</dbReference>
<dbReference type="Gene3D" id="3.30.470.20">
    <property type="entry name" value="ATP-grasp fold, B domain"/>
    <property type="match status" value="1"/>
</dbReference>
<dbReference type="Gene3D" id="3.30.200.20">
    <property type="entry name" value="Phosphorylase Kinase, domain 1"/>
    <property type="match status" value="1"/>
</dbReference>
<dbReference type="HAMAP" id="MF_00137">
    <property type="entry name" value="SAICAR_synth"/>
    <property type="match status" value="1"/>
</dbReference>
<dbReference type="InterPro" id="IPR028923">
    <property type="entry name" value="SAICAR_synt/ADE2_N"/>
</dbReference>
<dbReference type="InterPro" id="IPR033934">
    <property type="entry name" value="SAICAR_synt_PurC"/>
</dbReference>
<dbReference type="InterPro" id="IPR001636">
    <property type="entry name" value="SAICAR_synth"/>
</dbReference>
<dbReference type="InterPro" id="IPR050089">
    <property type="entry name" value="SAICAR_synthetase"/>
</dbReference>
<dbReference type="InterPro" id="IPR018236">
    <property type="entry name" value="SAICAR_synthetase_CS"/>
</dbReference>
<dbReference type="NCBIfam" id="TIGR00081">
    <property type="entry name" value="purC"/>
    <property type="match status" value="1"/>
</dbReference>
<dbReference type="PANTHER" id="PTHR43599">
    <property type="entry name" value="MULTIFUNCTIONAL PROTEIN ADE2"/>
    <property type="match status" value="1"/>
</dbReference>
<dbReference type="PANTHER" id="PTHR43599:SF3">
    <property type="entry name" value="SI:DKEY-6E2.2"/>
    <property type="match status" value="1"/>
</dbReference>
<dbReference type="Pfam" id="PF01259">
    <property type="entry name" value="SAICAR_synt"/>
    <property type="match status" value="1"/>
</dbReference>
<dbReference type="SUPFAM" id="SSF56104">
    <property type="entry name" value="SAICAR synthase-like"/>
    <property type="match status" value="1"/>
</dbReference>
<dbReference type="PROSITE" id="PS01057">
    <property type="entry name" value="SAICAR_SYNTHETASE_1"/>
    <property type="match status" value="1"/>
</dbReference>
<dbReference type="PROSITE" id="PS01058">
    <property type="entry name" value="SAICAR_SYNTHETASE_2"/>
    <property type="match status" value="1"/>
</dbReference>
<name>PUR7_STRP2</name>
<protein>
    <recommendedName>
        <fullName evidence="1">Phosphoribosylaminoimidazole-succinocarboxamide synthase</fullName>
        <ecNumber evidence="1">6.3.2.6</ecNumber>
    </recommendedName>
    <alternativeName>
        <fullName evidence="1">SAICAR synthetase</fullName>
    </alternativeName>
</protein>
<proteinExistence type="inferred from homology"/>